<dbReference type="EMBL" id="AP002057">
    <property type="protein sequence ID" value="BAB03184.1"/>
    <property type="molecule type" value="Genomic_DNA"/>
</dbReference>
<dbReference type="EMBL" id="CP002686">
    <property type="protein sequence ID" value="ANM64405.1"/>
    <property type="molecule type" value="Genomic_DNA"/>
</dbReference>
<dbReference type="RefSeq" id="NP_001326435.1">
    <property type="nucleotide sequence ID" value="NM_001338972.1"/>
</dbReference>
<dbReference type="SMR" id="Q9LH88"/>
<dbReference type="FunCoup" id="Q9LH88">
    <property type="interactions" value="78"/>
</dbReference>
<dbReference type="STRING" id="3702.Q9LH88"/>
<dbReference type="EnsemblPlants" id="AT3G28853.1">
    <property type="protein sequence ID" value="AT3G28853.1"/>
    <property type="gene ID" value="AT3G28853"/>
</dbReference>
<dbReference type="GeneID" id="28719334"/>
<dbReference type="Gramene" id="AT3G28853.1">
    <property type="protein sequence ID" value="AT3G28853.1"/>
    <property type="gene ID" value="AT3G28853"/>
</dbReference>
<dbReference type="KEGG" id="ath:AT3G28853"/>
<dbReference type="Araport" id="AT3G28853"/>
<dbReference type="TAIR" id="AT3G28853"/>
<dbReference type="InParanoid" id="Q9LH88"/>
<dbReference type="OMA" id="PEMEWEL"/>
<dbReference type="PRO" id="PR:Q9LH88"/>
<dbReference type="Proteomes" id="UP000006548">
    <property type="component" value="Chromosome 3"/>
</dbReference>
<dbReference type="ExpressionAtlas" id="Q9LH88">
    <property type="expression patterns" value="baseline and differential"/>
</dbReference>
<dbReference type="GO" id="GO:0005634">
    <property type="term" value="C:nucleus"/>
    <property type="evidence" value="ECO:0007669"/>
    <property type="project" value="UniProtKB-SubCell"/>
</dbReference>
<dbReference type="GO" id="GO:0003677">
    <property type="term" value="F:DNA binding"/>
    <property type="evidence" value="ECO:0007669"/>
    <property type="project" value="UniProtKB-KW"/>
</dbReference>
<dbReference type="CDD" id="cd10017">
    <property type="entry name" value="B3_DNA"/>
    <property type="match status" value="1"/>
</dbReference>
<dbReference type="Gene3D" id="2.40.330.10">
    <property type="entry name" value="DNA-binding pseudobarrel domain"/>
    <property type="match status" value="1"/>
</dbReference>
<dbReference type="InterPro" id="IPR003340">
    <property type="entry name" value="B3_DNA-bd"/>
</dbReference>
<dbReference type="InterPro" id="IPR051442">
    <property type="entry name" value="B3_domain"/>
</dbReference>
<dbReference type="InterPro" id="IPR015300">
    <property type="entry name" value="DNA-bd_pseudobarrel_sf"/>
</dbReference>
<dbReference type="PANTHER" id="PTHR34269:SF17">
    <property type="entry name" value="B3 DOMAIN PROTEIN"/>
    <property type="match status" value="1"/>
</dbReference>
<dbReference type="PANTHER" id="PTHR34269">
    <property type="entry name" value="TRANSCRIPTION FACTOR B3-DOMAIN FAMILY-RELATED"/>
    <property type="match status" value="1"/>
</dbReference>
<dbReference type="Pfam" id="PF02362">
    <property type="entry name" value="B3"/>
    <property type="match status" value="1"/>
</dbReference>
<dbReference type="SMART" id="SM01019">
    <property type="entry name" value="B3"/>
    <property type="match status" value="1"/>
</dbReference>
<dbReference type="SUPFAM" id="SSF101936">
    <property type="entry name" value="DNA-binding pseudobarrel domain"/>
    <property type="match status" value="1"/>
</dbReference>
<dbReference type="PROSITE" id="PS50863">
    <property type="entry name" value="B3"/>
    <property type="match status" value="1"/>
</dbReference>
<name>Y3852_ARATH</name>
<reference key="1">
    <citation type="journal article" date="2000" name="DNA Res.">
        <title>Structural analysis of Arabidopsis thaliana chromosome 3. II. Sequence features of the 4,251,695 bp regions covered by 90 P1, TAC and BAC clones.</title>
        <authorList>
            <person name="Kaneko T."/>
            <person name="Katoh T."/>
            <person name="Sato S."/>
            <person name="Nakamura Y."/>
            <person name="Asamizu E."/>
            <person name="Tabata S."/>
        </authorList>
    </citation>
    <scope>NUCLEOTIDE SEQUENCE [LARGE SCALE GENOMIC DNA]</scope>
    <source>
        <strain>cv. Columbia</strain>
    </source>
</reference>
<reference key="2">
    <citation type="journal article" date="2017" name="Plant J.">
        <title>Araport11: a complete reannotation of the Arabidopsis thaliana reference genome.</title>
        <authorList>
            <person name="Cheng C.Y."/>
            <person name="Krishnakumar V."/>
            <person name="Chan A.P."/>
            <person name="Thibaud-Nissen F."/>
            <person name="Schobel S."/>
            <person name="Town C.D."/>
        </authorList>
    </citation>
    <scope>GENOME REANNOTATION</scope>
    <source>
        <strain>cv. Columbia</strain>
    </source>
</reference>
<reference key="3">
    <citation type="journal article" date="2008" name="Trends Plant Sci.">
        <title>The plant B3 superfamily.</title>
        <authorList>
            <person name="Swaminathan K."/>
            <person name="Peterson K."/>
            <person name="Jack T."/>
        </authorList>
    </citation>
    <scope>GENE FAMILY</scope>
</reference>
<keyword id="KW-0238">DNA-binding</keyword>
<keyword id="KW-0539">Nucleus</keyword>
<keyword id="KW-1185">Reference proteome</keyword>
<keyword id="KW-0804">Transcription</keyword>
<keyword id="KW-0805">Transcription regulation</keyword>
<accession>Q9LH88</accession>
<sequence length="120" mass="14459">MADNIDLELSLQTNHSMIINKRLTQSDVDYNNRLHLPKREFEQFILPEMEWELVMNLRNSVEVIVKDVNGNEYHVTLVKYQNGHYYFMGKWMDIVRAKGYKRDDEISLLWDKSNEVFYII</sequence>
<feature type="chain" id="PRO_0000412855" description="Putative B3 domain-containing protein At3g28853">
    <location>
        <begin position="1"/>
        <end position="120"/>
    </location>
</feature>
<feature type="DNA-binding region" description="TF-B3" evidence="1">
    <location>
        <begin position="19"/>
        <end position="120"/>
    </location>
</feature>
<gene>
    <name type="ordered locus">At3g28853</name>
    <name type="ORF">T19N8.16</name>
</gene>
<evidence type="ECO:0000255" key="1">
    <source>
        <dbReference type="PROSITE-ProRule" id="PRU00326"/>
    </source>
</evidence>
<protein>
    <recommendedName>
        <fullName>Putative B3 domain-containing protein At3g28853</fullName>
    </recommendedName>
</protein>
<organism>
    <name type="scientific">Arabidopsis thaliana</name>
    <name type="common">Mouse-ear cress</name>
    <dbReference type="NCBI Taxonomy" id="3702"/>
    <lineage>
        <taxon>Eukaryota</taxon>
        <taxon>Viridiplantae</taxon>
        <taxon>Streptophyta</taxon>
        <taxon>Embryophyta</taxon>
        <taxon>Tracheophyta</taxon>
        <taxon>Spermatophyta</taxon>
        <taxon>Magnoliopsida</taxon>
        <taxon>eudicotyledons</taxon>
        <taxon>Gunneridae</taxon>
        <taxon>Pentapetalae</taxon>
        <taxon>rosids</taxon>
        <taxon>malvids</taxon>
        <taxon>Brassicales</taxon>
        <taxon>Brassicaceae</taxon>
        <taxon>Camelineae</taxon>
        <taxon>Arabidopsis</taxon>
    </lineage>
</organism>
<comment type="subcellular location">
    <subcellularLocation>
        <location evidence="1">Nucleus</location>
    </subcellularLocation>
</comment>
<proteinExistence type="inferred from homology"/>